<dbReference type="EMBL" id="DQ897681">
    <property type="protein sequence ID" value="ABI17254.1"/>
    <property type="molecule type" value="Genomic_DNA"/>
</dbReference>
<dbReference type="RefSeq" id="YP_784063.1">
    <property type="nucleotide sequence ID" value="NC_008454.1"/>
</dbReference>
<dbReference type="SMR" id="Q06FW8"/>
<dbReference type="GeneID" id="4362774"/>
<dbReference type="GO" id="GO:0009535">
    <property type="term" value="C:chloroplast thylakoid membrane"/>
    <property type="evidence" value="ECO:0007669"/>
    <property type="project" value="UniProtKB-SubCell"/>
</dbReference>
<dbReference type="GO" id="GO:0009512">
    <property type="term" value="C:cytochrome b6f complex"/>
    <property type="evidence" value="ECO:0007669"/>
    <property type="project" value="InterPro"/>
</dbReference>
<dbReference type="GO" id="GO:0045158">
    <property type="term" value="F:electron transporter, transferring electrons within cytochrome b6/f complex of photosystem II activity"/>
    <property type="evidence" value="ECO:0007669"/>
    <property type="project" value="InterPro"/>
</dbReference>
<dbReference type="GO" id="GO:0017004">
    <property type="term" value="P:cytochrome complex assembly"/>
    <property type="evidence" value="ECO:0007669"/>
    <property type="project" value="UniProtKB-UniRule"/>
</dbReference>
<dbReference type="GO" id="GO:0015979">
    <property type="term" value="P:photosynthesis"/>
    <property type="evidence" value="ECO:0007669"/>
    <property type="project" value="UniProtKB-KW"/>
</dbReference>
<dbReference type="HAMAP" id="MF_00395">
    <property type="entry name" value="Cytb6_f_PetN"/>
    <property type="match status" value="1"/>
</dbReference>
<dbReference type="InterPro" id="IPR036143">
    <property type="entry name" value="Cytochr_b6-f_cplx_su8_sf"/>
</dbReference>
<dbReference type="InterPro" id="IPR005497">
    <property type="entry name" value="Cytochrome_b6-f_cplx_su8"/>
</dbReference>
<dbReference type="Pfam" id="PF03742">
    <property type="entry name" value="PetN"/>
    <property type="match status" value="1"/>
</dbReference>
<dbReference type="SUPFAM" id="SSF103451">
    <property type="entry name" value="PetN subunit of the cytochrome b6f complex"/>
    <property type="match status" value="1"/>
</dbReference>
<feature type="chain" id="PRO_0000275560" description="Cytochrome b6-f complex subunit 8">
    <location>
        <begin position="1"/>
        <end position="29"/>
    </location>
</feature>
<feature type="transmembrane region" description="Helical" evidence="1">
    <location>
        <begin position="3"/>
        <end position="23"/>
    </location>
</feature>
<reference key="1">
    <citation type="journal article" date="2006" name="Mol. Biol. Evol.">
        <title>The complete chloroplast genome sequence of Pelargonium x hortorum: organization and evolution of the largest and most highly rearranged chloroplast genome of land plants.</title>
        <authorList>
            <person name="Chumley T.W."/>
            <person name="Palmer J.D."/>
            <person name="Mower J.P."/>
            <person name="Fourcade H.M."/>
            <person name="Calie P.J."/>
            <person name="Boore J.L."/>
            <person name="Jansen R.K."/>
        </authorList>
    </citation>
    <scope>NUCLEOTIDE SEQUENCE [LARGE SCALE GENOMIC DNA]</scope>
    <source>
        <strain>cv. Ringo White</strain>
    </source>
</reference>
<gene>
    <name evidence="1" type="primary">petN</name>
</gene>
<geneLocation type="chloroplast"/>
<evidence type="ECO:0000255" key="1">
    <source>
        <dbReference type="HAMAP-Rule" id="MF_00395"/>
    </source>
</evidence>
<accession>Q06FW8</accession>
<organism>
    <name type="scientific">Pelargonium hortorum</name>
    <name type="common">Common geranium</name>
    <name type="synonym">Pelargonium inquinans x Pelargonium zonale</name>
    <dbReference type="NCBI Taxonomy" id="4031"/>
    <lineage>
        <taxon>Eukaryota</taxon>
        <taxon>Viridiplantae</taxon>
        <taxon>Streptophyta</taxon>
        <taxon>Embryophyta</taxon>
        <taxon>Tracheophyta</taxon>
        <taxon>Spermatophyta</taxon>
        <taxon>Magnoliopsida</taxon>
        <taxon>eudicotyledons</taxon>
        <taxon>Gunneridae</taxon>
        <taxon>Pentapetalae</taxon>
        <taxon>rosids</taxon>
        <taxon>malvids</taxon>
        <taxon>Geraniales</taxon>
        <taxon>Geraniaceae</taxon>
        <taxon>Pelargonium</taxon>
    </lineage>
</organism>
<name>PETN_PELHO</name>
<sequence length="29" mass="3170">MDIVSLAWAALMVVFTFSLSLVVWGRSGL</sequence>
<protein>
    <recommendedName>
        <fullName evidence="1">Cytochrome b6-f complex subunit 8</fullName>
    </recommendedName>
    <alternativeName>
        <fullName evidence="1">Cytochrome b6-f complex subunit PetN</fullName>
    </alternativeName>
    <alternativeName>
        <fullName evidence="1">Cytochrome b6-f complex subunit VIII</fullName>
    </alternativeName>
</protein>
<keyword id="KW-0150">Chloroplast</keyword>
<keyword id="KW-0249">Electron transport</keyword>
<keyword id="KW-0472">Membrane</keyword>
<keyword id="KW-0602">Photosynthesis</keyword>
<keyword id="KW-0934">Plastid</keyword>
<keyword id="KW-0793">Thylakoid</keyword>
<keyword id="KW-0812">Transmembrane</keyword>
<keyword id="KW-1133">Transmembrane helix</keyword>
<keyword id="KW-0813">Transport</keyword>
<comment type="function">
    <text evidence="1">Component of the cytochrome b6-f complex, which mediates electron transfer between photosystem II (PSII) and photosystem I (PSI), cyclic electron flow around PSI, and state transitions.</text>
</comment>
<comment type="subunit">
    <text evidence="1">The 4 large subunits of the cytochrome b6-f complex are cytochrome b6, subunit IV (17 kDa polypeptide, PetD), cytochrome f and the Rieske protein, while the 4 small subunits are PetG, PetL, PetM and PetN. The complex functions as a dimer.</text>
</comment>
<comment type="subcellular location">
    <subcellularLocation>
        <location>Plastid</location>
        <location>Chloroplast thylakoid membrane</location>
        <topology>Single-pass membrane protein</topology>
    </subcellularLocation>
</comment>
<comment type="similarity">
    <text evidence="1">Belongs to the PetN family.</text>
</comment>
<proteinExistence type="inferred from homology"/>